<evidence type="ECO:0000255" key="1">
    <source>
        <dbReference type="HAMAP-Rule" id="MF_00051"/>
    </source>
</evidence>
<gene>
    <name evidence="1" type="primary">glyA</name>
    <name type="ordered locus">Ccel_1680</name>
</gene>
<accession>B8I2N8</accession>
<dbReference type="EC" id="2.1.2.1" evidence="1"/>
<dbReference type="EMBL" id="CP001348">
    <property type="protein sequence ID" value="ACL76031.1"/>
    <property type="molecule type" value="Genomic_DNA"/>
</dbReference>
<dbReference type="RefSeq" id="WP_015925146.1">
    <property type="nucleotide sequence ID" value="NC_011898.1"/>
</dbReference>
<dbReference type="SMR" id="B8I2N8"/>
<dbReference type="STRING" id="394503.Ccel_1680"/>
<dbReference type="KEGG" id="cce:Ccel_1680"/>
<dbReference type="eggNOG" id="COG0112">
    <property type="taxonomic scope" value="Bacteria"/>
</dbReference>
<dbReference type="HOGENOM" id="CLU_022477_2_1_9"/>
<dbReference type="OrthoDB" id="9803846at2"/>
<dbReference type="UniPathway" id="UPA00193"/>
<dbReference type="UniPathway" id="UPA00288">
    <property type="reaction ID" value="UER01023"/>
</dbReference>
<dbReference type="Proteomes" id="UP000001349">
    <property type="component" value="Chromosome"/>
</dbReference>
<dbReference type="GO" id="GO:0005829">
    <property type="term" value="C:cytosol"/>
    <property type="evidence" value="ECO:0007669"/>
    <property type="project" value="TreeGrafter"/>
</dbReference>
<dbReference type="GO" id="GO:0004372">
    <property type="term" value="F:glycine hydroxymethyltransferase activity"/>
    <property type="evidence" value="ECO:0007669"/>
    <property type="project" value="UniProtKB-UniRule"/>
</dbReference>
<dbReference type="GO" id="GO:0030170">
    <property type="term" value="F:pyridoxal phosphate binding"/>
    <property type="evidence" value="ECO:0007669"/>
    <property type="project" value="UniProtKB-UniRule"/>
</dbReference>
<dbReference type="GO" id="GO:0019264">
    <property type="term" value="P:glycine biosynthetic process from serine"/>
    <property type="evidence" value="ECO:0007669"/>
    <property type="project" value="UniProtKB-UniRule"/>
</dbReference>
<dbReference type="GO" id="GO:0035999">
    <property type="term" value="P:tetrahydrofolate interconversion"/>
    <property type="evidence" value="ECO:0007669"/>
    <property type="project" value="UniProtKB-UniRule"/>
</dbReference>
<dbReference type="CDD" id="cd00378">
    <property type="entry name" value="SHMT"/>
    <property type="match status" value="1"/>
</dbReference>
<dbReference type="FunFam" id="3.40.640.10:FF:000001">
    <property type="entry name" value="Serine hydroxymethyltransferase"/>
    <property type="match status" value="1"/>
</dbReference>
<dbReference type="FunFam" id="3.90.1150.10:FF:000003">
    <property type="entry name" value="Serine hydroxymethyltransferase"/>
    <property type="match status" value="1"/>
</dbReference>
<dbReference type="Gene3D" id="3.90.1150.10">
    <property type="entry name" value="Aspartate Aminotransferase, domain 1"/>
    <property type="match status" value="1"/>
</dbReference>
<dbReference type="Gene3D" id="3.40.640.10">
    <property type="entry name" value="Type I PLP-dependent aspartate aminotransferase-like (Major domain)"/>
    <property type="match status" value="1"/>
</dbReference>
<dbReference type="HAMAP" id="MF_00051">
    <property type="entry name" value="SHMT"/>
    <property type="match status" value="1"/>
</dbReference>
<dbReference type="InterPro" id="IPR015424">
    <property type="entry name" value="PyrdxlP-dep_Trfase"/>
</dbReference>
<dbReference type="InterPro" id="IPR015421">
    <property type="entry name" value="PyrdxlP-dep_Trfase_major"/>
</dbReference>
<dbReference type="InterPro" id="IPR015422">
    <property type="entry name" value="PyrdxlP-dep_Trfase_small"/>
</dbReference>
<dbReference type="InterPro" id="IPR001085">
    <property type="entry name" value="Ser_HO-MeTrfase"/>
</dbReference>
<dbReference type="InterPro" id="IPR049943">
    <property type="entry name" value="Ser_HO-MeTrfase-like"/>
</dbReference>
<dbReference type="InterPro" id="IPR019798">
    <property type="entry name" value="Ser_HO-MeTrfase_PLP_BS"/>
</dbReference>
<dbReference type="InterPro" id="IPR039429">
    <property type="entry name" value="SHMT-like_dom"/>
</dbReference>
<dbReference type="NCBIfam" id="NF000586">
    <property type="entry name" value="PRK00011.1"/>
    <property type="match status" value="1"/>
</dbReference>
<dbReference type="PANTHER" id="PTHR11680">
    <property type="entry name" value="SERINE HYDROXYMETHYLTRANSFERASE"/>
    <property type="match status" value="1"/>
</dbReference>
<dbReference type="PANTHER" id="PTHR11680:SF35">
    <property type="entry name" value="SERINE HYDROXYMETHYLTRANSFERASE 1"/>
    <property type="match status" value="1"/>
</dbReference>
<dbReference type="Pfam" id="PF00464">
    <property type="entry name" value="SHMT"/>
    <property type="match status" value="1"/>
</dbReference>
<dbReference type="PIRSF" id="PIRSF000412">
    <property type="entry name" value="SHMT"/>
    <property type="match status" value="1"/>
</dbReference>
<dbReference type="SUPFAM" id="SSF53383">
    <property type="entry name" value="PLP-dependent transferases"/>
    <property type="match status" value="1"/>
</dbReference>
<dbReference type="PROSITE" id="PS00096">
    <property type="entry name" value="SHMT"/>
    <property type="match status" value="1"/>
</dbReference>
<feature type="chain" id="PRO_1000195439" description="Serine hydroxymethyltransferase">
    <location>
        <begin position="1"/>
        <end position="412"/>
    </location>
</feature>
<feature type="binding site" evidence="1">
    <location>
        <position position="120"/>
    </location>
    <ligand>
        <name>(6S)-5,6,7,8-tetrahydrofolate</name>
        <dbReference type="ChEBI" id="CHEBI:57453"/>
    </ligand>
</feature>
<feature type="binding site" evidence="1">
    <location>
        <begin position="124"/>
        <end position="126"/>
    </location>
    <ligand>
        <name>(6S)-5,6,7,8-tetrahydrofolate</name>
        <dbReference type="ChEBI" id="CHEBI:57453"/>
    </ligand>
</feature>
<feature type="binding site" evidence="1">
    <location>
        <begin position="352"/>
        <end position="354"/>
    </location>
    <ligand>
        <name>(6S)-5,6,7,8-tetrahydrofolate</name>
        <dbReference type="ChEBI" id="CHEBI:57453"/>
    </ligand>
</feature>
<feature type="site" description="Plays an important role in substrate specificity" evidence="1">
    <location>
        <position position="228"/>
    </location>
</feature>
<feature type="modified residue" description="N6-(pyridoxal phosphate)lysine" evidence="1">
    <location>
        <position position="229"/>
    </location>
</feature>
<protein>
    <recommendedName>
        <fullName evidence="1">Serine hydroxymethyltransferase</fullName>
        <shortName evidence="1">SHMT</shortName>
        <shortName evidence="1">Serine methylase</shortName>
        <ecNumber evidence="1">2.1.2.1</ecNumber>
    </recommendedName>
</protein>
<sequence length="412" mass="45244">MYNIDTIKKIDSQLAEAIELEVNRQRNKIELIASENFVSDAVIEALGTPLTNKYAEGYPGKRYYGGCEYVDIVEQLAIDRAKQIFGAEHANVQPHSGAQANTAVYFAFLNPGDTILGMNLAHGGHLSHGSPVNISGKYYKVVPYGVREDNCYIDYDELRKTAKENSPKIIVAGASAYPRILDFKAFREIADEVGAILMVDMAHIAGLVAAGVHPSPVPYADVVTTTTHKTLRGPRGGMILCKQEYAKKIDSAVFPGNQGGPLMHVIAAKAVSFKEALTDDFKIYQQNIVKNAKALASALMEKGFKLVSDGTDNHLMLINLTNMNITGKEAQHKLDEVCITCNKNGIPFDTQSPFITSGIRLGTPAVTSRGMNEEDMKEIADLIHLTISDFENSRTNIIRRVEALCNKYPLYE</sequence>
<comment type="function">
    <text evidence="1">Catalyzes the reversible interconversion of serine and glycine with tetrahydrofolate (THF) serving as the one-carbon carrier. This reaction serves as the major source of one-carbon groups required for the biosynthesis of purines, thymidylate, methionine, and other important biomolecules. Also exhibits THF-independent aldolase activity toward beta-hydroxyamino acids, producing glycine and aldehydes, via a retro-aldol mechanism.</text>
</comment>
<comment type="catalytic activity">
    <reaction evidence="1">
        <text>(6R)-5,10-methylene-5,6,7,8-tetrahydrofolate + glycine + H2O = (6S)-5,6,7,8-tetrahydrofolate + L-serine</text>
        <dbReference type="Rhea" id="RHEA:15481"/>
        <dbReference type="ChEBI" id="CHEBI:15377"/>
        <dbReference type="ChEBI" id="CHEBI:15636"/>
        <dbReference type="ChEBI" id="CHEBI:33384"/>
        <dbReference type="ChEBI" id="CHEBI:57305"/>
        <dbReference type="ChEBI" id="CHEBI:57453"/>
        <dbReference type="EC" id="2.1.2.1"/>
    </reaction>
</comment>
<comment type="cofactor">
    <cofactor evidence="1">
        <name>pyridoxal 5'-phosphate</name>
        <dbReference type="ChEBI" id="CHEBI:597326"/>
    </cofactor>
</comment>
<comment type="pathway">
    <text evidence="1">One-carbon metabolism; tetrahydrofolate interconversion.</text>
</comment>
<comment type="pathway">
    <text evidence="1">Amino-acid biosynthesis; glycine biosynthesis; glycine from L-serine: step 1/1.</text>
</comment>
<comment type="subunit">
    <text evidence="1">Homodimer.</text>
</comment>
<comment type="subcellular location">
    <subcellularLocation>
        <location evidence="1">Cytoplasm</location>
    </subcellularLocation>
</comment>
<comment type="similarity">
    <text evidence="1">Belongs to the SHMT family.</text>
</comment>
<proteinExistence type="inferred from homology"/>
<keyword id="KW-0028">Amino-acid biosynthesis</keyword>
<keyword id="KW-0963">Cytoplasm</keyword>
<keyword id="KW-0554">One-carbon metabolism</keyword>
<keyword id="KW-0663">Pyridoxal phosphate</keyword>
<keyword id="KW-1185">Reference proteome</keyword>
<keyword id="KW-0808">Transferase</keyword>
<reference key="1">
    <citation type="submission" date="2009-01" db="EMBL/GenBank/DDBJ databases">
        <title>Complete sequence of Clostridium cellulolyticum H10.</title>
        <authorList>
            <consortium name="US DOE Joint Genome Institute"/>
            <person name="Lucas S."/>
            <person name="Copeland A."/>
            <person name="Lapidus A."/>
            <person name="Glavina del Rio T."/>
            <person name="Dalin E."/>
            <person name="Tice H."/>
            <person name="Bruce D."/>
            <person name="Goodwin L."/>
            <person name="Pitluck S."/>
            <person name="Chertkov O."/>
            <person name="Saunders E."/>
            <person name="Brettin T."/>
            <person name="Detter J.C."/>
            <person name="Han C."/>
            <person name="Larimer F."/>
            <person name="Land M."/>
            <person name="Hauser L."/>
            <person name="Kyrpides N."/>
            <person name="Ivanova N."/>
            <person name="Zhou J."/>
            <person name="Richardson P."/>
        </authorList>
    </citation>
    <scope>NUCLEOTIDE SEQUENCE [LARGE SCALE GENOMIC DNA]</scope>
    <source>
        <strain>ATCC 35319 / DSM 5812 / JCM 6584 / H10</strain>
    </source>
</reference>
<organism>
    <name type="scientific">Ruminiclostridium cellulolyticum (strain ATCC 35319 / DSM 5812 / JCM 6584 / H10)</name>
    <name type="common">Clostridium cellulolyticum</name>
    <dbReference type="NCBI Taxonomy" id="394503"/>
    <lineage>
        <taxon>Bacteria</taxon>
        <taxon>Bacillati</taxon>
        <taxon>Bacillota</taxon>
        <taxon>Clostridia</taxon>
        <taxon>Eubacteriales</taxon>
        <taxon>Oscillospiraceae</taxon>
        <taxon>Ruminiclostridium</taxon>
    </lineage>
</organism>
<name>GLYA_RUMCH</name>